<proteinExistence type="inferred from homology"/>
<protein>
    <recommendedName>
        <fullName evidence="1">Ribosomal RNA small subunit methyltransferase H</fullName>
        <ecNumber evidence="1">2.1.1.199</ecNumber>
    </recommendedName>
    <alternativeName>
        <fullName evidence="1">16S rRNA m(4)C1402 methyltransferase</fullName>
    </alternativeName>
    <alternativeName>
        <fullName evidence="1">rRNA (cytosine-N(4)-)-methyltransferase RsmH</fullName>
    </alternativeName>
</protein>
<name>RSMH_CLOPS</name>
<accession>Q0SRV9</accession>
<feature type="chain" id="PRO_1000062824" description="Ribosomal RNA small subunit methyltransferase H">
    <location>
        <begin position="1"/>
        <end position="310"/>
    </location>
</feature>
<feature type="binding site" evidence="1">
    <location>
        <begin position="33"/>
        <end position="35"/>
    </location>
    <ligand>
        <name>S-adenosyl-L-methionine</name>
        <dbReference type="ChEBI" id="CHEBI:59789"/>
    </ligand>
</feature>
<feature type="binding site" evidence="1">
    <location>
        <position position="53"/>
    </location>
    <ligand>
        <name>S-adenosyl-L-methionine</name>
        <dbReference type="ChEBI" id="CHEBI:59789"/>
    </ligand>
</feature>
<feature type="binding site" evidence="1">
    <location>
        <position position="83"/>
    </location>
    <ligand>
        <name>S-adenosyl-L-methionine</name>
        <dbReference type="ChEBI" id="CHEBI:59789"/>
    </ligand>
</feature>
<feature type="binding site" evidence="1">
    <location>
        <position position="100"/>
    </location>
    <ligand>
        <name>S-adenosyl-L-methionine</name>
        <dbReference type="ChEBI" id="CHEBI:59789"/>
    </ligand>
</feature>
<feature type="binding site" evidence="1">
    <location>
        <position position="107"/>
    </location>
    <ligand>
        <name>S-adenosyl-L-methionine</name>
        <dbReference type="ChEBI" id="CHEBI:59789"/>
    </ligand>
</feature>
<organism>
    <name type="scientific">Clostridium perfringens (strain SM101 / Type A)</name>
    <dbReference type="NCBI Taxonomy" id="289380"/>
    <lineage>
        <taxon>Bacteria</taxon>
        <taxon>Bacillati</taxon>
        <taxon>Bacillota</taxon>
        <taxon>Clostridia</taxon>
        <taxon>Eubacteriales</taxon>
        <taxon>Clostridiaceae</taxon>
        <taxon>Clostridium</taxon>
    </lineage>
</organism>
<keyword id="KW-0963">Cytoplasm</keyword>
<keyword id="KW-0489">Methyltransferase</keyword>
<keyword id="KW-0698">rRNA processing</keyword>
<keyword id="KW-0949">S-adenosyl-L-methionine</keyword>
<keyword id="KW-0808">Transferase</keyword>
<gene>
    <name evidence="1" type="primary">rsmH</name>
    <name type="synonym">mraW</name>
    <name type="ordered locus">CPR_1833</name>
</gene>
<reference key="1">
    <citation type="journal article" date="2006" name="Genome Res.">
        <title>Skewed genomic variability in strains of the toxigenic bacterial pathogen, Clostridium perfringens.</title>
        <authorList>
            <person name="Myers G.S.A."/>
            <person name="Rasko D.A."/>
            <person name="Cheung J.K."/>
            <person name="Ravel J."/>
            <person name="Seshadri R."/>
            <person name="DeBoy R.T."/>
            <person name="Ren Q."/>
            <person name="Varga J."/>
            <person name="Awad M.M."/>
            <person name="Brinkac L.M."/>
            <person name="Daugherty S.C."/>
            <person name="Haft D.H."/>
            <person name="Dodson R.J."/>
            <person name="Madupu R."/>
            <person name="Nelson W.C."/>
            <person name="Rosovitz M.J."/>
            <person name="Sullivan S.A."/>
            <person name="Khouri H."/>
            <person name="Dimitrov G.I."/>
            <person name="Watkins K.L."/>
            <person name="Mulligan S."/>
            <person name="Benton J."/>
            <person name="Radune D."/>
            <person name="Fisher D.J."/>
            <person name="Atkins H.S."/>
            <person name="Hiscox T."/>
            <person name="Jost B.H."/>
            <person name="Billington S.J."/>
            <person name="Songer J.G."/>
            <person name="McClane B.A."/>
            <person name="Titball R.W."/>
            <person name="Rood J.I."/>
            <person name="Melville S.B."/>
            <person name="Paulsen I.T."/>
        </authorList>
    </citation>
    <scope>NUCLEOTIDE SEQUENCE [LARGE SCALE GENOMIC DNA]</scope>
    <source>
        <strain>SM101 / Type A</strain>
    </source>
</reference>
<dbReference type="EC" id="2.1.1.199" evidence="1"/>
<dbReference type="EMBL" id="CP000312">
    <property type="protein sequence ID" value="ABG87100.1"/>
    <property type="molecule type" value="Genomic_DNA"/>
</dbReference>
<dbReference type="RefSeq" id="WP_003451137.1">
    <property type="nucleotide sequence ID" value="NZ_CAXVJE010000001.1"/>
</dbReference>
<dbReference type="SMR" id="Q0SRV9"/>
<dbReference type="GeneID" id="93001600"/>
<dbReference type="KEGG" id="cpr:CPR_1833"/>
<dbReference type="Proteomes" id="UP000001824">
    <property type="component" value="Chromosome"/>
</dbReference>
<dbReference type="GO" id="GO:0005737">
    <property type="term" value="C:cytoplasm"/>
    <property type="evidence" value="ECO:0007669"/>
    <property type="project" value="UniProtKB-SubCell"/>
</dbReference>
<dbReference type="GO" id="GO:0071424">
    <property type="term" value="F:rRNA (cytosine-N4-)-methyltransferase activity"/>
    <property type="evidence" value="ECO:0007669"/>
    <property type="project" value="UniProtKB-UniRule"/>
</dbReference>
<dbReference type="GO" id="GO:0070475">
    <property type="term" value="P:rRNA base methylation"/>
    <property type="evidence" value="ECO:0007669"/>
    <property type="project" value="UniProtKB-UniRule"/>
</dbReference>
<dbReference type="FunFam" id="1.10.150.170:FF:000001">
    <property type="entry name" value="Ribosomal RNA small subunit methyltransferase H"/>
    <property type="match status" value="1"/>
</dbReference>
<dbReference type="Gene3D" id="1.10.150.170">
    <property type="entry name" value="Putative methyltransferase TM0872, insert domain"/>
    <property type="match status" value="1"/>
</dbReference>
<dbReference type="Gene3D" id="3.40.50.150">
    <property type="entry name" value="Vaccinia Virus protein VP39"/>
    <property type="match status" value="1"/>
</dbReference>
<dbReference type="HAMAP" id="MF_01007">
    <property type="entry name" value="16SrRNA_methyltr_H"/>
    <property type="match status" value="1"/>
</dbReference>
<dbReference type="InterPro" id="IPR002903">
    <property type="entry name" value="RsmH"/>
</dbReference>
<dbReference type="InterPro" id="IPR023397">
    <property type="entry name" value="SAM-dep_MeTrfase_MraW_recog"/>
</dbReference>
<dbReference type="InterPro" id="IPR029063">
    <property type="entry name" value="SAM-dependent_MTases_sf"/>
</dbReference>
<dbReference type="NCBIfam" id="TIGR00006">
    <property type="entry name" value="16S rRNA (cytosine(1402)-N(4))-methyltransferase RsmH"/>
    <property type="match status" value="1"/>
</dbReference>
<dbReference type="PANTHER" id="PTHR11265:SF0">
    <property type="entry name" value="12S RRNA N4-METHYLCYTIDINE METHYLTRANSFERASE"/>
    <property type="match status" value="1"/>
</dbReference>
<dbReference type="PANTHER" id="PTHR11265">
    <property type="entry name" value="S-ADENOSYL-METHYLTRANSFERASE MRAW"/>
    <property type="match status" value="1"/>
</dbReference>
<dbReference type="Pfam" id="PF01795">
    <property type="entry name" value="Methyltransf_5"/>
    <property type="match status" value="1"/>
</dbReference>
<dbReference type="PIRSF" id="PIRSF004486">
    <property type="entry name" value="MraW"/>
    <property type="match status" value="1"/>
</dbReference>
<dbReference type="SUPFAM" id="SSF81799">
    <property type="entry name" value="Putative methyltransferase TM0872, insert domain"/>
    <property type="match status" value="1"/>
</dbReference>
<dbReference type="SUPFAM" id="SSF53335">
    <property type="entry name" value="S-adenosyl-L-methionine-dependent methyltransferases"/>
    <property type="match status" value="1"/>
</dbReference>
<evidence type="ECO:0000255" key="1">
    <source>
        <dbReference type="HAMAP-Rule" id="MF_01007"/>
    </source>
</evidence>
<comment type="function">
    <text evidence="1">Specifically methylates the N4 position of cytidine in position 1402 (C1402) of 16S rRNA.</text>
</comment>
<comment type="catalytic activity">
    <reaction evidence="1">
        <text>cytidine(1402) in 16S rRNA + S-adenosyl-L-methionine = N(4)-methylcytidine(1402) in 16S rRNA + S-adenosyl-L-homocysteine + H(+)</text>
        <dbReference type="Rhea" id="RHEA:42928"/>
        <dbReference type="Rhea" id="RHEA-COMP:10286"/>
        <dbReference type="Rhea" id="RHEA-COMP:10287"/>
        <dbReference type="ChEBI" id="CHEBI:15378"/>
        <dbReference type="ChEBI" id="CHEBI:57856"/>
        <dbReference type="ChEBI" id="CHEBI:59789"/>
        <dbReference type="ChEBI" id="CHEBI:74506"/>
        <dbReference type="ChEBI" id="CHEBI:82748"/>
        <dbReference type="EC" id="2.1.1.199"/>
    </reaction>
</comment>
<comment type="subcellular location">
    <subcellularLocation>
        <location evidence="1">Cytoplasm</location>
    </subcellularLocation>
</comment>
<comment type="similarity">
    <text evidence="1">Belongs to the methyltransferase superfamily. RsmH family.</text>
</comment>
<sequence length="310" mass="35248">MEFKHVSVLLDECINALNIKEDGIYVDCTLGGAGHSSEIVKRLSSDGRLIGFDQDKDALKAAGERLKDYKNVTYVHSNFYAIYDVLTDLGIDGVDGILMDLGVSSYQLDNGERGFSYMQDAPLDMRMNRENEFSAYEIVNTYSEEELYRIIKEYGEEKFAKRIASFIVKNREEKNIETTLELVEIIKAAIPAKARREGPHPAKRTFQAIRIEVNKELEIISKTILDGVKKLNKGGRMAIITFHSLEDRIVKNTFKELANPCTCPSEFPVCVCNRKPEVKLISRKPIEASKEELEFNPRSRSAKLRIIEKL</sequence>